<feature type="chain" id="PRO_1000187638" description="Membrane protein insertase YidC">
    <location>
        <begin position="1"/>
        <end position="532"/>
    </location>
</feature>
<feature type="transmembrane region" description="Helical" evidence="1">
    <location>
        <begin position="7"/>
        <end position="27"/>
    </location>
</feature>
<feature type="transmembrane region" description="Helical" evidence="1">
    <location>
        <begin position="336"/>
        <end position="356"/>
    </location>
</feature>
<feature type="transmembrane region" description="Helical" evidence="1">
    <location>
        <begin position="413"/>
        <end position="433"/>
    </location>
</feature>
<feature type="transmembrane region" description="Helical" evidence="1">
    <location>
        <begin position="450"/>
        <end position="470"/>
    </location>
</feature>
<feature type="transmembrane region" description="Helical" evidence="1">
    <location>
        <begin position="492"/>
        <end position="512"/>
    </location>
</feature>
<gene>
    <name evidence="1" type="primary">yidC</name>
    <name type="ordered locus">BUAPTUC7_015</name>
</gene>
<sequence>MEVQRNFFIFAFLFVSFLLWQAWQSQMFLNKKTNEKIDPIFHFIDVKKNKKKIFIKNDVISLVVNMYGGDVEEASLLAYKDTLYSSRPFKLLETGSDFIYQAQSGLIGKDGPDSSINDSRPLYSANKNFFVLGPNEKELRVPIKWLSKNGVIYKKTFILKPNRYDVQIEYDVYNPSKESLNMNIFGQIKQTINLPKKRNVYSGNFALQTFRGAAYSSDDNKYEKYKFDMIANNKNLHIMTESGWIAMLQQYFAVAWIPDNLGKNTIYTSSLDHDTAVIGYKSPIINIPPNSRSIIKSKLWIGPEIQKEMKLVAPNLDLTVDYGWLWFLSQPLFKLLTILYSIIGNWGFSIILITFIMRGLTYPLTKAQYISMAKMRALQPKIQEIKEKFSKDKQRISQEMILLYKKEKINPLGGFLPIFIQMPIFLSLYYMLIGSVELRHAPFLLWIHDLSSQDPYYVLPVIMGLTMFFIQKISSTNHISDPLQKKIMNFMPVIFTAFFLWFPSGLVLYYIISNLVTIIQQKFILSNLEKNR</sequence>
<protein>
    <recommendedName>
        <fullName evidence="1">Membrane protein insertase YidC</fullName>
    </recommendedName>
    <alternativeName>
        <fullName evidence="1">Foldase YidC</fullName>
    </alternativeName>
    <alternativeName>
        <fullName evidence="1">Membrane integrase YidC</fullName>
    </alternativeName>
    <alternativeName>
        <fullName evidence="1">Membrane protein YidC</fullName>
    </alternativeName>
</protein>
<proteinExistence type="inferred from homology"/>
<dbReference type="EMBL" id="CP001158">
    <property type="protein sequence ID" value="ACL29848.1"/>
    <property type="molecule type" value="Genomic_DNA"/>
</dbReference>
<dbReference type="RefSeq" id="WP_012619402.1">
    <property type="nucleotide sequence ID" value="NC_011834.1"/>
</dbReference>
<dbReference type="SMR" id="B8D6T3"/>
<dbReference type="KEGG" id="bau:BUAPTUC7_015"/>
<dbReference type="HOGENOM" id="CLU_016535_3_0_6"/>
<dbReference type="GO" id="GO:0005886">
    <property type="term" value="C:plasma membrane"/>
    <property type="evidence" value="ECO:0007669"/>
    <property type="project" value="UniProtKB-SubCell"/>
</dbReference>
<dbReference type="GO" id="GO:0032977">
    <property type="term" value="F:membrane insertase activity"/>
    <property type="evidence" value="ECO:0007669"/>
    <property type="project" value="InterPro"/>
</dbReference>
<dbReference type="GO" id="GO:0051205">
    <property type="term" value="P:protein insertion into membrane"/>
    <property type="evidence" value="ECO:0007669"/>
    <property type="project" value="TreeGrafter"/>
</dbReference>
<dbReference type="GO" id="GO:0015031">
    <property type="term" value="P:protein transport"/>
    <property type="evidence" value="ECO:0007669"/>
    <property type="project" value="UniProtKB-KW"/>
</dbReference>
<dbReference type="CDD" id="cd20070">
    <property type="entry name" value="5TM_YidC_Alb3"/>
    <property type="match status" value="1"/>
</dbReference>
<dbReference type="CDD" id="cd19961">
    <property type="entry name" value="EcYidC-like_peri"/>
    <property type="match status" value="1"/>
</dbReference>
<dbReference type="Gene3D" id="2.70.98.90">
    <property type="match status" value="1"/>
</dbReference>
<dbReference type="HAMAP" id="MF_01810">
    <property type="entry name" value="YidC_type1"/>
    <property type="match status" value="1"/>
</dbReference>
<dbReference type="InterPro" id="IPR019998">
    <property type="entry name" value="Membr_insert_YidC"/>
</dbReference>
<dbReference type="InterPro" id="IPR028053">
    <property type="entry name" value="Membr_insert_YidC_N"/>
</dbReference>
<dbReference type="InterPro" id="IPR001708">
    <property type="entry name" value="YidC/ALB3/OXA1/COX18"/>
</dbReference>
<dbReference type="InterPro" id="IPR028055">
    <property type="entry name" value="YidC/Oxa/ALB_C"/>
</dbReference>
<dbReference type="InterPro" id="IPR047196">
    <property type="entry name" value="YidC_ALB_C"/>
</dbReference>
<dbReference type="InterPro" id="IPR038221">
    <property type="entry name" value="YidC_periplasmic_sf"/>
</dbReference>
<dbReference type="NCBIfam" id="NF002351">
    <property type="entry name" value="PRK01318.1-1"/>
    <property type="match status" value="1"/>
</dbReference>
<dbReference type="NCBIfam" id="NF002352">
    <property type="entry name" value="PRK01318.1-3"/>
    <property type="match status" value="1"/>
</dbReference>
<dbReference type="NCBIfam" id="TIGR03593">
    <property type="entry name" value="yidC_nterm"/>
    <property type="match status" value="1"/>
</dbReference>
<dbReference type="NCBIfam" id="TIGR03592">
    <property type="entry name" value="yidC_oxa1_cterm"/>
    <property type="match status" value="1"/>
</dbReference>
<dbReference type="PANTHER" id="PTHR12428:SF65">
    <property type="entry name" value="CYTOCHROME C OXIDASE ASSEMBLY PROTEIN COX18, MITOCHONDRIAL"/>
    <property type="match status" value="1"/>
</dbReference>
<dbReference type="PANTHER" id="PTHR12428">
    <property type="entry name" value="OXA1"/>
    <property type="match status" value="1"/>
</dbReference>
<dbReference type="Pfam" id="PF02096">
    <property type="entry name" value="60KD_IMP"/>
    <property type="match status" value="1"/>
</dbReference>
<dbReference type="Pfam" id="PF14849">
    <property type="entry name" value="YidC_periplas"/>
    <property type="match status" value="1"/>
</dbReference>
<dbReference type="PRINTS" id="PR00701">
    <property type="entry name" value="60KDINNERMP"/>
</dbReference>
<dbReference type="PRINTS" id="PR01900">
    <property type="entry name" value="YIDCPROTEIN"/>
</dbReference>
<keyword id="KW-1003">Cell membrane</keyword>
<keyword id="KW-0143">Chaperone</keyword>
<keyword id="KW-0472">Membrane</keyword>
<keyword id="KW-0653">Protein transport</keyword>
<keyword id="KW-0812">Transmembrane</keyword>
<keyword id="KW-1133">Transmembrane helix</keyword>
<keyword id="KW-0813">Transport</keyword>
<evidence type="ECO:0000255" key="1">
    <source>
        <dbReference type="HAMAP-Rule" id="MF_01810"/>
    </source>
</evidence>
<comment type="function">
    <text evidence="1">Required for the insertion and/or proper folding and/or complex formation of integral membrane proteins into the membrane. Involved in integration of membrane proteins that insert both dependently and independently of the Sec translocase complex, as well as at least some lipoproteins. Aids folding of multispanning membrane proteins.</text>
</comment>
<comment type="subunit">
    <text evidence="1">Interacts with the Sec translocase complex via SecD. Specifically interacts with transmembrane segments of nascent integral membrane proteins during membrane integration.</text>
</comment>
<comment type="subcellular location">
    <subcellularLocation>
        <location evidence="1">Cell membrane</location>
        <topology evidence="1">Multi-pass membrane protein</topology>
    </subcellularLocation>
</comment>
<comment type="similarity">
    <text evidence="1">Belongs to the OXA1/ALB3/YidC family. Type 1 subfamily.</text>
</comment>
<accession>B8D6T3</accession>
<name>YIDC_BUCAT</name>
<reference key="1">
    <citation type="journal article" date="2009" name="Science">
        <title>The dynamics and time scale of ongoing genomic erosion in symbiotic bacteria.</title>
        <authorList>
            <person name="Moran N.A."/>
            <person name="McLaughlin H.J."/>
            <person name="Sorek R."/>
        </authorList>
    </citation>
    <scope>NUCLEOTIDE SEQUENCE [LARGE SCALE GENOMIC DNA]</scope>
    <source>
        <strain>Tuc7</strain>
    </source>
</reference>
<organism>
    <name type="scientific">Buchnera aphidicola subsp. Acyrthosiphon pisum (strain Tuc7)</name>
    <dbReference type="NCBI Taxonomy" id="561501"/>
    <lineage>
        <taxon>Bacteria</taxon>
        <taxon>Pseudomonadati</taxon>
        <taxon>Pseudomonadota</taxon>
        <taxon>Gammaproteobacteria</taxon>
        <taxon>Enterobacterales</taxon>
        <taxon>Erwiniaceae</taxon>
        <taxon>Buchnera</taxon>
    </lineage>
</organism>